<geneLocation type="chloroplast"/>
<protein>
    <recommendedName>
        <fullName evidence="1">ATP synthase subunit b, chloroplastic</fullName>
    </recommendedName>
    <alternativeName>
        <fullName evidence="1">ATP synthase F(0) sector subunit b</fullName>
    </alternativeName>
    <alternativeName>
        <fullName evidence="1">ATPase subunit I</fullName>
    </alternativeName>
</protein>
<name>ATPF_AETGR</name>
<sequence length="184" mass="21184">MKNVTDSFVYLGHWPSAGSFGFNTDILATNLINLSVVFGVLIFFGKGVLNDLLDNRKQRILNTIRNSEELREGAIQQLENARARLRKVEKEADQFRVNGYSEIEREKLNLINSTYRTLKQLENYKNETILFEQQRTINQVRERVFQQALQGAIVTLKSCLSNELHLRTINANIGMFGTMKEITD</sequence>
<gene>
    <name evidence="1" type="primary">atpF</name>
</gene>
<accession>A4QJI5</accession>
<proteinExistence type="inferred from homology"/>
<comment type="function">
    <text evidence="1">F(1)F(0) ATP synthase produces ATP from ADP in the presence of a proton or sodium gradient. F-type ATPases consist of two structural domains, F(1) containing the extramembraneous catalytic core and F(0) containing the membrane proton channel, linked together by a central stalk and a peripheral stalk. During catalysis, ATP synthesis in the catalytic domain of F(1) is coupled via a rotary mechanism of the central stalk subunits to proton translocation.</text>
</comment>
<comment type="function">
    <text evidence="1">Component of the F(0) channel, it forms part of the peripheral stalk, linking F(1) to F(0).</text>
</comment>
<comment type="subunit">
    <text evidence="1">F-type ATPases have 2 components, F(1) - the catalytic core - and F(0) - the membrane proton channel. F(1) has five subunits: alpha(3), beta(3), gamma(1), delta(1), epsilon(1). F(0) has four main subunits: a(1), b(1), b'(1) and c(10-14). The alpha and beta chains form an alternating ring which encloses part of the gamma chain. F(1) is attached to F(0) by a central stalk formed by the gamma and epsilon chains, while a peripheral stalk is formed by the delta, b and b' chains.</text>
</comment>
<comment type="subcellular location">
    <subcellularLocation>
        <location evidence="1">Plastid</location>
        <location evidence="1">Chloroplast thylakoid membrane</location>
        <topology evidence="1">Single-pass membrane protein</topology>
    </subcellularLocation>
</comment>
<comment type="miscellaneous">
    <text>In plastids the F-type ATPase is also known as CF(1)CF(0).</text>
</comment>
<comment type="similarity">
    <text evidence="1">Belongs to the ATPase B chain family.</text>
</comment>
<reference key="1">
    <citation type="submission" date="2007-03" db="EMBL/GenBank/DDBJ databases">
        <title>Sequencing analysis of Aethionema grandiflorum chloroplast DNA.</title>
        <authorList>
            <person name="Hosouchi T."/>
            <person name="Tsuruoka H."/>
            <person name="Kotani H."/>
        </authorList>
    </citation>
    <scope>NUCLEOTIDE SEQUENCE [LARGE SCALE GENOMIC DNA]</scope>
</reference>
<keyword id="KW-0066">ATP synthesis</keyword>
<keyword id="KW-0138">CF(0)</keyword>
<keyword id="KW-0150">Chloroplast</keyword>
<keyword id="KW-0375">Hydrogen ion transport</keyword>
<keyword id="KW-0406">Ion transport</keyword>
<keyword id="KW-0472">Membrane</keyword>
<keyword id="KW-0934">Plastid</keyword>
<keyword id="KW-0793">Thylakoid</keyword>
<keyword id="KW-0812">Transmembrane</keyword>
<keyword id="KW-1133">Transmembrane helix</keyword>
<keyword id="KW-0813">Transport</keyword>
<organism>
    <name type="scientific">Aethionema grandiflorum</name>
    <name type="common">Persian stone-cress</name>
    <dbReference type="NCBI Taxonomy" id="72657"/>
    <lineage>
        <taxon>Eukaryota</taxon>
        <taxon>Viridiplantae</taxon>
        <taxon>Streptophyta</taxon>
        <taxon>Embryophyta</taxon>
        <taxon>Tracheophyta</taxon>
        <taxon>Spermatophyta</taxon>
        <taxon>Magnoliopsida</taxon>
        <taxon>eudicotyledons</taxon>
        <taxon>Gunneridae</taxon>
        <taxon>Pentapetalae</taxon>
        <taxon>rosids</taxon>
        <taxon>malvids</taxon>
        <taxon>Brassicales</taxon>
        <taxon>Brassicaceae</taxon>
        <taxon>Aethionemeae</taxon>
        <taxon>Aethionema</taxon>
    </lineage>
</organism>
<evidence type="ECO:0000255" key="1">
    <source>
        <dbReference type="HAMAP-Rule" id="MF_01398"/>
    </source>
</evidence>
<dbReference type="EMBL" id="AP009367">
    <property type="protein sequence ID" value="BAF49840.1"/>
    <property type="molecule type" value="Genomic_DNA"/>
</dbReference>
<dbReference type="RefSeq" id="YP_001123016.1">
    <property type="nucleotide sequence ID" value="NC_009266.1"/>
</dbReference>
<dbReference type="SMR" id="A4QJI5"/>
<dbReference type="GeneID" id="4962334"/>
<dbReference type="GO" id="GO:0009535">
    <property type="term" value="C:chloroplast thylakoid membrane"/>
    <property type="evidence" value="ECO:0007669"/>
    <property type="project" value="UniProtKB-SubCell"/>
</dbReference>
<dbReference type="GO" id="GO:0045259">
    <property type="term" value="C:proton-transporting ATP synthase complex"/>
    <property type="evidence" value="ECO:0007669"/>
    <property type="project" value="UniProtKB-KW"/>
</dbReference>
<dbReference type="GO" id="GO:0046933">
    <property type="term" value="F:proton-transporting ATP synthase activity, rotational mechanism"/>
    <property type="evidence" value="ECO:0007669"/>
    <property type="project" value="UniProtKB-UniRule"/>
</dbReference>
<dbReference type="CDD" id="cd06503">
    <property type="entry name" value="ATP-synt_Fo_b"/>
    <property type="match status" value="1"/>
</dbReference>
<dbReference type="HAMAP" id="MF_01398">
    <property type="entry name" value="ATP_synth_b_bprime"/>
    <property type="match status" value="1"/>
</dbReference>
<dbReference type="InterPro" id="IPR002146">
    <property type="entry name" value="ATP_synth_b/b'su_bac/chlpt"/>
</dbReference>
<dbReference type="PANTHER" id="PTHR34264">
    <property type="entry name" value="ATP SYNTHASE SUBUNIT B, CHLOROPLASTIC"/>
    <property type="match status" value="1"/>
</dbReference>
<dbReference type="PANTHER" id="PTHR34264:SF3">
    <property type="entry name" value="ATP SYNTHASE SUBUNIT B, CHLOROPLASTIC"/>
    <property type="match status" value="1"/>
</dbReference>
<dbReference type="Pfam" id="PF00430">
    <property type="entry name" value="ATP-synt_B"/>
    <property type="match status" value="1"/>
</dbReference>
<feature type="chain" id="PRO_0000368901" description="ATP synthase subunit b, chloroplastic">
    <location>
        <begin position="1"/>
        <end position="184"/>
    </location>
</feature>
<feature type="transmembrane region" description="Helical" evidence="1">
    <location>
        <begin position="27"/>
        <end position="49"/>
    </location>
</feature>